<sequence>MSESATPHGSPGEKLRLAGLIGVLGVVYGDIGTSPLYAVQASLSYFPGNKLQESDVLGLLSLIFWALIITVTIKYVLLIMRADNEGEGGTLSLMALAQRVTQSDRTKWIIGIIGICGAGLFFGDATITPAISVLSAVEGMEVVSPGLKEFVLPIAIAVILVLFFVQRFGTARVGGAFGPIMVIWFVVIGALGLHQIFIHPNVLRALVPVYGAAFIMRHDLLAFIALGSVVLAVTGAEALYADMGHFGAKPIRVSWLFFVLPCLLLNYFGQGALVIRDPHAASNPFFFLLPHALVVPMVILATIATVIASQAVISGAYSVARQSTQLGLLPRMPIRYTNETEQGQIYVPPVNSFLFVVVVLLVLGFGSSSALASAYGIAVTGTFLSTNALAAFVYCRHFNWPLRRTVLVFGAIGLVDFAFFSSNVLKVFDGGWVPLAIGFSLITVMTTWRRGRALLHQRWQQDSLPLASFLGRLPQSRIVRVPGVAVFMTGNPEYTPSSLLHNLKHNKVLHETVVFVTVRNPGVPFVGDARRAKVEELSEGVYRVLLSFGFMESPNIPRALDLLREQGLPFNPMQISYFLGRETIVAATVPKLGFIRRAIFLFMLRNAISATEFFKIPSDRVVELGVRIAI</sequence>
<evidence type="ECO:0000255" key="1">
    <source>
        <dbReference type="HAMAP-Rule" id="MF_01522"/>
    </source>
</evidence>
<organism>
    <name type="scientific">Acidiphilium cryptum (strain JF-5)</name>
    <dbReference type="NCBI Taxonomy" id="349163"/>
    <lineage>
        <taxon>Bacteria</taxon>
        <taxon>Pseudomonadati</taxon>
        <taxon>Pseudomonadota</taxon>
        <taxon>Alphaproteobacteria</taxon>
        <taxon>Acetobacterales</taxon>
        <taxon>Acidocellaceae</taxon>
        <taxon>Acidiphilium</taxon>
    </lineage>
</organism>
<gene>
    <name evidence="1" type="primary">kup</name>
    <name type="ordered locus">Acry_0141</name>
</gene>
<keyword id="KW-0997">Cell inner membrane</keyword>
<keyword id="KW-1003">Cell membrane</keyword>
<keyword id="KW-0406">Ion transport</keyword>
<keyword id="KW-0472">Membrane</keyword>
<keyword id="KW-0630">Potassium</keyword>
<keyword id="KW-0633">Potassium transport</keyword>
<keyword id="KW-1185">Reference proteome</keyword>
<keyword id="KW-0769">Symport</keyword>
<keyword id="KW-0812">Transmembrane</keyword>
<keyword id="KW-1133">Transmembrane helix</keyword>
<keyword id="KW-0813">Transport</keyword>
<name>KUP_ACICJ</name>
<comment type="function">
    <text evidence="1">Transport of potassium into the cell. Likely operates as a K(+):H(+) symporter.</text>
</comment>
<comment type="catalytic activity">
    <reaction evidence="1">
        <text>K(+)(in) + H(+)(in) = K(+)(out) + H(+)(out)</text>
        <dbReference type="Rhea" id="RHEA:28490"/>
        <dbReference type="ChEBI" id="CHEBI:15378"/>
        <dbReference type="ChEBI" id="CHEBI:29103"/>
    </reaction>
    <physiologicalReaction direction="right-to-left" evidence="1">
        <dbReference type="Rhea" id="RHEA:28492"/>
    </physiologicalReaction>
</comment>
<comment type="subcellular location">
    <subcellularLocation>
        <location evidence="1">Cell inner membrane</location>
        <topology evidence="1">Multi-pass membrane protein</topology>
    </subcellularLocation>
</comment>
<comment type="similarity">
    <text evidence="1">Belongs to the HAK/KUP transporter (TC 2.A.72) family.</text>
</comment>
<protein>
    <recommendedName>
        <fullName evidence="1">Probable potassium transport system protein Kup</fullName>
    </recommendedName>
</protein>
<accession>A5FUT7</accession>
<proteinExistence type="inferred from homology"/>
<dbReference type="EMBL" id="CP000697">
    <property type="protein sequence ID" value="ABQ29369.1"/>
    <property type="molecule type" value="Genomic_DNA"/>
</dbReference>
<dbReference type="RefSeq" id="WP_007422440.1">
    <property type="nucleotide sequence ID" value="NC_009484.1"/>
</dbReference>
<dbReference type="STRING" id="349163.Acry_0141"/>
<dbReference type="KEGG" id="acr:Acry_0141"/>
<dbReference type="eggNOG" id="COG3158">
    <property type="taxonomic scope" value="Bacteria"/>
</dbReference>
<dbReference type="HOGENOM" id="CLU_008142_4_2_5"/>
<dbReference type="Proteomes" id="UP000000245">
    <property type="component" value="Chromosome"/>
</dbReference>
<dbReference type="GO" id="GO:0005886">
    <property type="term" value="C:plasma membrane"/>
    <property type="evidence" value="ECO:0007669"/>
    <property type="project" value="UniProtKB-SubCell"/>
</dbReference>
<dbReference type="GO" id="GO:0015079">
    <property type="term" value="F:potassium ion transmembrane transporter activity"/>
    <property type="evidence" value="ECO:0007669"/>
    <property type="project" value="UniProtKB-UniRule"/>
</dbReference>
<dbReference type="GO" id="GO:0015293">
    <property type="term" value="F:symporter activity"/>
    <property type="evidence" value="ECO:0007669"/>
    <property type="project" value="UniProtKB-UniRule"/>
</dbReference>
<dbReference type="HAMAP" id="MF_01522">
    <property type="entry name" value="Kup"/>
    <property type="match status" value="1"/>
</dbReference>
<dbReference type="InterPro" id="IPR003855">
    <property type="entry name" value="K+_transporter"/>
</dbReference>
<dbReference type="InterPro" id="IPR053952">
    <property type="entry name" value="K_trans_C"/>
</dbReference>
<dbReference type="InterPro" id="IPR053951">
    <property type="entry name" value="K_trans_N"/>
</dbReference>
<dbReference type="InterPro" id="IPR023051">
    <property type="entry name" value="Kup"/>
</dbReference>
<dbReference type="PANTHER" id="PTHR30540:SF79">
    <property type="entry name" value="LOW AFFINITY POTASSIUM TRANSPORT SYSTEM PROTEIN KUP"/>
    <property type="match status" value="1"/>
</dbReference>
<dbReference type="PANTHER" id="PTHR30540">
    <property type="entry name" value="OSMOTIC STRESS POTASSIUM TRANSPORTER"/>
    <property type="match status" value="1"/>
</dbReference>
<dbReference type="Pfam" id="PF02705">
    <property type="entry name" value="K_trans"/>
    <property type="match status" value="1"/>
</dbReference>
<dbReference type="Pfam" id="PF22776">
    <property type="entry name" value="K_trans_C"/>
    <property type="match status" value="1"/>
</dbReference>
<reference key="1">
    <citation type="submission" date="2007-05" db="EMBL/GenBank/DDBJ databases">
        <title>Complete sequence of chromosome of Acidiphilium cryptum JF-5.</title>
        <authorList>
            <consortium name="US DOE Joint Genome Institute"/>
            <person name="Copeland A."/>
            <person name="Lucas S."/>
            <person name="Lapidus A."/>
            <person name="Barry K."/>
            <person name="Detter J.C."/>
            <person name="Glavina del Rio T."/>
            <person name="Hammon N."/>
            <person name="Israni S."/>
            <person name="Dalin E."/>
            <person name="Tice H."/>
            <person name="Pitluck S."/>
            <person name="Sims D."/>
            <person name="Brettin T."/>
            <person name="Bruce D."/>
            <person name="Han C."/>
            <person name="Schmutz J."/>
            <person name="Larimer F."/>
            <person name="Land M."/>
            <person name="Hauser L."/>
            <person name="Kyrpides N."/>
            <person name="Kim E."/>
            <person name="Magnuson T."/>
            <person name="Richardson P."/>
        </authorList>
    </citation>
    <scope>NUCLEOTIDE SEQUENCE [LARGE SCALE GENOMIC DNA]</scope>
    <source>
        <strain>JF-5</strain>
    </source>
</reference>
<feature type="chain" id="PRO_0000315980" description="Probable potassium transport system protein Kup">
    <location>
        <begin position="1"/>
        <end position="630"/>
    </location>
</feature>
<feature type="transmembrane region" description="Helical" evidence="1">
    <location>
        <begin position="19"/>
        <end position="39"/>
    </location>
</feature>
<feature type="transmembrane region" description="Helical" evidence="1">
    <location>
        <begin position="59"/>
        <end position="79"/>
    </location>
</feature>
<feature type="transmembrane region" description="Helical" evidence="1">
    <location>
        <begin position="108"/>
        <end position="128"/>
    </location>
</feature>
<feature type="transmembrane region" description="Helical" evidence="1">
    <location>
        <begin position="145"/>
        <end position="165"/>
    </location>
</feature>
<feature type="transmembrane region" description="Helical" evidence="1">
    <location>
        <begin position="173"/>
        <end position="193"/>
    </location>
</feature>
<feature type="transmembrane region" description="Helical" evidence="1">
    <location>
        <begin position="220"/>
        <end position="240"/>
    </location>
</feature>
<feature type="transmembrane region" description="Helical" evidence="1">
    <location>
        <begin position="255"/>
        <end position="275"/>
    </location>
</feature>
<feature type="transmembrane region" description="Helical" evidence="1">
    <location>
        <begin position="284"/>
        <end position="304"/>
    </location>
</feature>
<feature type="transmembrane region" description="Helical" evidence="1">
    <location>
        <begin position="345"/>
        <end position="365"/>
    </location>
</feature>
<feature type="transmembrane region" description="Helical" evidence="1">
    <location>
        <begin position="374"/>
        <end position="394"/>
    </location>
</feature>
<feature type="transmembrane region" description="Helical" evidence="1">
    <location>
        <begin position="405"/>
        <end position="425"/>
    </location>
</feature>
<feature type="transmembrane region" description="Helical" evidence="1">
    <location>
        <begin position="427"/>
        <end position="447"/>
    </location>
</feature>